<comment type="function">
    <text evidence="1">Specific class of high-redox-potential 4Fe-4S ferredoxins. Functions in anaerobic electron transport in most purple and in some other photosynthetic bacteria and in at least one genus (Paracoccus) of halophilic, denitrifying bacteria.</text>
</comment>
<comment type="subunit">
    <text evidence="1">Homodimer.</text>
</comment>
<comment type="mass spectrometry" mass="8104.7" method="Electrospray" evidence="3"/>
<comment type="mass spectrometry" mass="8147.2" method="Electrospray" evidence="3">
    <text>With Ala-1 carbamylated.</text>
</comment>
<comment type="similarity">
    <text evidence="2">Belongs to the high-potential iron-sulfur protein (HiPIP) family.</text>
</comment>
<feature type="chain" id="PRO_0000220418" description="High-potential iron-sulfur protein isozyme 1" evidence="4">
    <location>
        <begin position="1"/>
        <end position="72"/>
    </location>
</feature>
<feature type="binding site" evidence="4">
    <location>
        <position position="34"/>
    </location>
    <ligand>
        <name>[4Fe-4S] cluster</name>
        <dbReference type="ChEBI" id="CHEBI:49883"/>
    </ligand>
</feature>
<feature type="binding site" evidence="4">
    <location>
        <position position="37"/>
    </location>
    <ligand>
        <name>[4Fe-4S] cluster</name>
        <dbReference type="ChEBI" id="CHEBI:49883"/>
    </ligand>
</feature>
<feature type="binding site" evidence="4">
    <location>
        <position position="51"/>
    </location>
    <ligand>
        <name>[4Fe-4S] cluster</name>
        <dbReference type="ChEBI" id="CHEBI:49883"/>
    </ligand>
</feature>
<feature type="binding site" evidence="4">
    <location>
        <position position="65"/>
    </location>
    <ligand>
        <name>[4Fe-4S] cluster</name>
        <dbReference type="ChEBI" id="CHEBI:49883"/>
    </ligand>
</feature>
<feature type="modified residue" description="N-carbamoylalanine; partial" evidence="3">
    <location>
        <position position="1"/>
    </location>
</feature>
<dbReference type="SMR" id="P83341"/>
<dbReference type="STRING" id="195064.SAMN05421721_103142"/>
<dbReference type="GO" id="GO:0051539">
    <property type="term" value="F:4 iron, 4 sulfur cluster binding"/>
    <property type="evidence" value="ECO:0007669"/>
    <property type="project" value="UniProtKB-KW"/>
</dbReference>
<dbReference type="GO" id="GO:0009055">
    <property type="term" value="F:electron transfer activity"/>
    <property type="evidence" value="ECO:0007669"/>
    <property type="project" value="InterPro"/>
</dbReference>
<dbReference type="GO" id="GO:0046872">
    <property type="term" value="F:metal ion binding"/>
    <property type="evidence" value="ECO:0007669"/>
    <property type="project" value="UniProtKB-KW"/>
</dbReference>
<dbReference type="GO" id="GO:0019646">
    <property type="term" value="P:aerobic electron transport chain"/>
    <property type="evidence" value="ECO:0007669"/>
    <property type="project" value="InterPro"/>
</dbReference>
<dbReference type="Gene3D" id="4.10.490.10">
    <property type="entry name" value="High potential iron-sulphur protein"/>
    <property type="match status" value="1"/>
</dbReference>
<dbReference type="InterPro" id="IPR000170">
    <property type="entry name" value="High_potential_FeS_prot"/>
</dbReference>
<dbReference type="InterPro" id="IPR036369">
    <property type="entry name" value="HIPIP_sf"/>
</dbReference>
<dbReference type="Pfam" id="PF01355">
    <property type="entry name" value="HIPIP"/>
    <property type="match status" value="1"/>
</dbReference>
<dbReference type="SUPFAM" id="SSF57652">
    <property type="entry name" value="HIPIP (high potential iron protein)"/>
    <property type="match status" value="1"/>
</dbReference>
<dbReference type="PROSITE" id="PS51373">
    <property type="entry name" value="HIPIP"/>
    <property type="match status" value="1"/>
</dbReference>
<proteinExistence type="evidence at protein level"/>
<accession>P83341</accession>
<keyword id="KW-0004">4Fe-4S</keyword>
<keyword id="KW-0903">Direct protein sequencing</keyword>
<keyword id="KW-0249">Electron transport</keyword>
<keyword id="KW-0408">Iron</keyword>
<keyword id="KW-0411">Iron-sulfur</keyword>
<keyword id="KW-0479">Metal-binding</keyword>
<keyword id="KW-0813">Transport</keyword>
<sequence length="72" mass="7758">AEKLEESSAEAKALSYVHDATTSGHDSYQEGQKCINCLLYTDPSQEEWGGCAVFPGKLVNANGWCTAYVARG</sequence>
<name>HIP1_ECTMO</name>
<reference evidence="4" key="1">
    <citation type="journal article" date="2002" name="J. Mass Spectrom.">
        <title>Mass spectrometric identification of in vivo carbamylation of the amino terminus of Ectothiorhodospira mobilis high-potential iron-sulfur protein, isozyme 1.</title>
        <authorList>
            <person name="Van Driessche G.A.A."/>
            <person name="Vandenberghe I."/>
            <person name="Jacquemotte F."/>
            <person name="Devreese B."/>
            <person name="Van Beeumen J.J."/>
        </authorList>
    </citation>
    <scope>PROTEIN SEQUENCE</scope>
    <scope>CARBAMYLATION AT ALA-1</scope>
    <scope>MASS SPECTROMETRY</scope>
</reference>
<evidence type="ECO:0000250" key="1">
    <source>
        <dbReference type="UniProtKB" id="P38524"/>
    </source>
</evidence>
<evidence type="ECO:0000255" key="2">
    <source>
        <dbReference type="PROSITE-ProRule" id="PRU00705"/>
    </source>
</evidence>
<evidence type="ECO:0000269" key="3">
    <source>
    </source>
</evidence>
<evidence type="ECO:0000305" key="4"/>
<protein>
    <recommendedName>
        <fullName>High-potential iron-sulfur protein isozyme 1</fullName>
        <shortName>HiPIP 1</shortName>
    </recommendedName>
</protein>
<organism>
    <name type="scientific">Ectothiorhodospira mobilis</name>
    <dbReference type="NCBI Taxonomy" id="195064"/>
    <lineage>
        <taxon>Bacteria</taxon>
        <taxon>Pseudomonadati</taxon>
        <taxon>Pseudomonadota</taxon>
        <taxon>Gammaproteobacteria</taxon>
        <taxon>Chromatiales</taxon>
        <taxon>Ectothiorhodospiraceae</taxon>
        <taxon>Ectothiorhodospira</taxon>
    </lineage>
</organism>